<evidence type="ECO:0000255" key="1"/>
<evidence type="ECO:0000256" key="2">
    <source>
        <dbReference type="SAM" id="MobiDB-lite"/>
    </source>
</evidence>
<evidence type="ECO:0000269" key="3">
    <source>
    </source>
</evidence>
<evidence type="ECO:0000269" key="4">
    <source>
    </source>
</evidence>
<evidence type="ECO:0000269" key="5">
    <source>
    </source>
</evidence>
<evidence type="ECO:0000269" key="6">
    <source>
    </source>
</evidence>
<evidence type="ECO:0000269" key="7">
    <source>
    </source>
</evidence>
<evidence type="ECO:0000269" key="8">
    <source>
    </source>
</evidence>
<evidence type="ECO:0000269" key="9">
    <source>
    </source>
</evidence>
<evidence type="ECO:0000269" key="10">
    <source>
    </source>
</evidence>
<evidence type="ECO:0000269" key="11">
    <source>
    </source>
</evidence>
<evidence type="ECO:0000269" key="12">
    <source>
    </source>
</evidence>
<evidence type="ECO:0000303" key="13">
    <source>
    </source>
</evidence>
<evidence type="ECO:0000305" key="14"/>
<sequence length="134" mass="15394">MDFVMKQALGGATKDMGKMLGGEEEKDPDAQKKEEERQEALRQQEEERKAKHARMEAEREKVRQQIRDKYGLKKKEEKEAEEKAALEQPCEGSLTRPKKAIPAGCGDEEEEEEESILDTVLKYLPGPLQDMFKK</sequence>
<accession>P84087</accession>
<accession>O09056</accession>
<accession>Q13329</accession>
<accession>Q28184</accession>
<accession>Q64386</accession>
<dbReference type="EMBL" id="U35099">
    <property type="protein sequence ID" value="AAC52271.1"/>
    <property type="molecule type" value="mRNA"/>
</dbReference>
<dbReference type="EMBL" id="D70816">
    <property type="protein sequence ID" value="BAA11096.1"/>
    <property type="molecule type" value="mRNA"/>
</dbReference>
<dbReference type="PIR" id="C57233">
    <property type="entry name" value="C57233"/>
</dbReference>
<dbReference type="PIR" id="JC4226">
    <property type="entry name" value="JC4226"/>
</dbReference>
<dbReference type="RefSeq" id="NP_446330.1">
    <property type="nucleotide sequence ID" value="NM_053878.3"/>
</dbReference>
<dbReference type="RefSeq" id="XP_017455929.1">
    <property type="nucleotide sequence ID" value="XM_017600440.3"/>
</dbReference>
<dbReference type="RefSeq" id="XP_017455930.1">
    <property type="nucleotide sequence ID" value="XM_017600441.3"/>
</dbReference>
<dbReference type="RefSeq" id="XP_038951231.1">
    <property type="nucleotide sequence ID" value="XM_039095303.2"/>
</dbReference>
<dbReference type="RefSeq" id="XP_063132098.1">
    <property type="nucleotide sequence ID" value="XM_063276028.1"/>
</dbReference>
<dbReference type="SMR" id="P84087"/>
<dbReference type="BioGRID" id="250542">
    <property type="interactions" value="1"/>
</dbReference>
<dbReference type="CORUM" id="P84087"/>
<dbReference type="DIP" id="DIP-48643N"/>
<dbReference type="FunCoup" id="P84087">
    <property type="interactions" value="681"/>
</dbReference>
<dbReference type="IntAct" id="P84087">
    <property type="interactions" value="2"/>
</dbReference>
<dbReference type="STRING" id="10116.ENSRNOP00000072664"/>
<dbReference type="iPTMnet" id="P84087"/>
<dbReference type="PhosphoSitePlus" id="P84087"/>
<dbReference type="jPOST" id="P84087"/>
<dbReference type="PaxDb" id="10116-ENSRNOP00000000117"/>
<dbReference type="Ensembl" id="ENSRNOT00000091046.2">
    <property type="protein sequence ID" value="ENSRNOP00000072664.1"/>
    <property type="gene ID" value="ENSRNOG00000000105.7"/>
</dbReference>
<dbReference type="GeneID" id="116657"/>
<dbReference type="KEGG" id="rno:116657"/>
<dbReference type="UCSC" id="RGD:70945">
    <property type="organism name" value="rat"/>
</dbReference>
<dbReference type="AGR" id="RGD:70945"/>
<dbReference type="CTD" id="10814"/>
<dbReference type="RGD" id="70945">
    <property type="gene designation" value="Cplx2"/>
</dbReference>
<dbReference type="eggNOG" id="ENOG502RXXI">
    <property type="taxonomic scope" value="Eukaryota"/>
</dbReference>
<dbReference type="GeneTree" id="ENSGT00950000182938"/>
<dbReference type="InParanoid" id="P84087"/>
<dbReference type="OMA" id="AKMILGN"/>
<dbReference type="PhylomeDB" id="P84087"/>
<dbReference type="TreeFam" id="TF315172"/>
<dbReference type="PRO" id="PR:P84087"/>
<dbReference type="Proteomes" id="UP000002494">
    <property type="component" value="Chromosome 17"/>
</dbReference>
<dbReference type="Bgee" id="ENSRNOG00000000105">
    <property type="expression patterns" value="Expressed in frontal cortex and 18 other cell types or tissues"/>
</dbReference>
<dbReference type="GO" id="GO:0044305">
    <property type="term" value="C:calyx of Held"/>
    <property type="evidence" value="ECO:0000266"/>
    <property type="project" value="RGD"/>
</dbReference>
<dbReference type="GO" id="GO:0005829">
    <property type="term" value="C:cytosol"/>
    <property type="evidence" value="ECO:0007669"/>
    <property type="project" value="UniProtKB-SubCell"/>
</dbReference>
<dbReference type="GO" id="GO:0030425">
    <property type="term" value="C:dendrite"/>
    <property type="evidence" value="ECO:0000314"/>
    <property type="project" value="MGI"/>
</dbReference>
<dbReference type="GO" id="GO:0098978">
    <property type="term" value="C:glutamatergic synapse"/>
    <property type="evidence" value="ECO:0000266"/>
    <property type="project" value="RGD"/>
</dbReference>
<dbReference type="GO" id="GO:0043025">
    <property type="term" value="C:neuronal cell body"/>
    <property type="evidence" value="ECO:0000314"/>
    <property type="project" value="MGI"/>
</dbReference>
<dbReference type="GO" id="GO:0005634">
    <property type="term" value="C:nucleus"/>
    <property type="evidence" value="ECO:0007669"/>
    <property type="project" value="UniProtKB-SubCell"/>
</dbReference>
<dbReference type="GO" id="GO:0043204">
    <property type="term" value="C:perikaryon"/>
    <property type="evidence" value="ECO:0007669"/>
    <property type="project" value="UniProtKB-SubCell"/>
</dbReference>
<dbReference type="GO" id="GO:0098794">
    <property type="term" value="C:postsynapse"/>
    <property type="evidence" value="ECO:0000314"/>
    <property type="project" value="SynGO"/>
</dbReference>
<dbReference type="GO" id="GO:0098793">
    <property type="term" value="C:presynapse"/>
    <property type="evidence" value="ECO:0000314"/>
    <property type="project" value="SynGO"/>
</dbReference>
<dbReference type="GO" id="GO:0031201">
    <property type="term" value="C:SNARE complex"/>
    <property type="evidence" value="ECO:0000314"/>
    <property type="project" value="RGD"/>
</dbReference>
<dbReference type="GO" id="GO:0045202">
    <property type="term" value="C:synapse"/>
    <property type="evidence" value="ECO:0000314"/>
    <property type="project" value="MGI"/>
</dbReference>
<dbReference type="GO" id="GO:0070033">
    <property type="term" value="C:synaptobrevin 2-SNAP-25-syntaxin-1a-complexin II complex"/>
    <property type="evidence" value="ECO:0000314"/>
    <property type="project" value="RGD"/>
</dbReference>
<dbReference type="GO" id="GO:0043195">
    <property type="term" value="C:terminal bouton"/>
    <property type="evidence" value="ECO:0007005"/>
    <property type="project" value="ParkinsonsUK-UCL"/>
</dbReference>
<dbReference type="GO" id="GO:0048306">
    <property type="term" value="F:calcium-dependent protein binding"/>
    <property type="evidence" value="ECO:0000353"/>
    <property type="project" value="RGD"/>
</dbReference>
<dbReference type="GO" id="GO:0000149">
    <property type="term" value="F:SNARE binding"/>
    <property type="evidence" value="ECO:0000314"/>
    <property type="project" value="RGD"/>
</dbReference>
<dbReference type="GO" id="GO:0017075">
    <property type="term" value="F:syntaxin-1 binding"/>
    <property type="evidence" value="ECO:0000314"/>
    <property type="project" value="MGI"/>
</dbReference>
<dbReference type="GO" id="GO:0043303">
    <property type="term" value="P:mast cell degranulation"/>
    <property type="evidence" value="ECO:0007669"/>
    <property type="project" value="UniProtKB-KW"/>
</dbReference>
<dbReference type="GO" id="GO:0050804">
    <property type="term" value="P:modulation of chemical synaptic transmission"/>
    <property type="evidence" value="ECO:0000318"/>
    <property type="project" value="GO_Central"/>
</dbReference>
<dbReference type="GO" id="GO:0031915">
    <property type="term" value="P:positive regulation of synaptic plasticity"/>
    <property type="evidence" value="ECO:0000250"/>
    <property type="project" value="UniProtKB"/>
</dbReference>
<dbReference type="GO" id="GO:0031630">
    <property type="term" value="P:regulation of synaptic vesicle fusion to presynaptic active zone membrane"/>
    <property type="evidence" value="ECO:0000266"/>
    <property type="project" value="RGD"/>
</dbReference>
<dbReference type="GO" id="GO:0016079">
    <property type="term" value="P:synaptic vesicle exocytosis"/>
    <property type="evidence" value="ECO:0000314"/>
    <property type="project" value="RGD"/>
</dbReference>
<dbReference type="GO" id="GO:0006904">
    <property type="term" value="P:vesicle docking involved in exocytosis"/>
    <property type="evidence" value="ECO:0000304"/>
    <property type="project" value="ProtInc"/>
</dbReference>
<dbReference type="CDD" id="cd22808">
    <property type="entry name" value="Complexin_NTD_CPLX_I_II"/>
    <property type="match status" value="1"/>
</dbReference>
<dbReference type="FunFam" id="1.20.5.580:FF:000001">
    <property type="entry name" value="Complexin 2"/>
    <property type="match status" value="1"/>
</dbReference>
<dbReference type="Gene3D" id="1.20.5.580">
    <property type="entry name" value="Single Helix bin"/>
    <property type="match status" value="1"/>
</dbReference>
<dbReference type="InterPro" id="IPR008849">
    <property type="entry name" value="Synaphin"/>
</dbReference>
<dbReference type="PANTHER" id="PTHR16705">
    <property type="entry name" value="COMPLEXIN"/>
    <property type="match status" value="1"/>
</dbReference>
<dbReference type="PANTHER" id="PTHR16705:SF9">
    <property type="entry name" value="COMPLEXIN-2"/>
    <property type="match status" value="1"/>
</dbReference>
<dbReference type="Pfam" id="PF05835">
    <property type="entry name" value="Synaphin"/>
    <property type="match status" value="1"/>
</dbReference>
<dbReference type="SUPFAM" id="SSF58038">
    <property type="entry name" value="SNARE fusion complex"/>
    <property type="match status" value="1"/>
</dbReference>
<reference key="1">
    <citation type="journal article" date="1995" name="Cell">
        <title>Complexins: cytosolic proteins that regulate SNAP receptor function.</title>
        <authorList>
            <person name="McMahon H.T."/>
            <person name="Missler M."/>
            <person name="Li C."/>
            <person name="Suedhof T.C."/>
        </authorList>
    </citation>
    <scope>NUCLEOTIDE SEQUENCE [MRNA]</scope>
    <scope>PROTEIN SEQUENCE OF 19-49; 55-69 AND 84-98</scope>
    <scope>TISSUE SPECIFICITY</scope>
    <scope>SUBUNIT</scope>
    <source>
        <tissue>Brain</tissue>
    </source>
</reference>
<reference key="2">
    <citation type="journal article" date="1999" name="Neuroscience">
        <title>Distinct regional distribution in the brain of messenger RNAs for the two isoforms of synaphin associated with the docking/fusion complex.</title>
        <authorList>
            <person name="Ishizuka T."/>
            <person name="Saisu H."/>
            <person name="Odani S."/>
            <person name="Kumanishi T."/>
            <person name="Abe T."/>
        </authorList>
    </citation>
    <scope>NUCLEOTIDE SEQUENCE [MRNA]</scope>
    <scope>TISSUE SPECIFICITY</scope>
    <source>
        <strain>Sprague-Dawley</strain>
        <tissue>Brain</tissue>
    </source>
</reference>
<reference key="3">
    <citation type="journal article" date="2006" name="Biochem. Biophys. Res. Commun.">
        <title>Identification of okadaic acid-induced phosphorylation events by a mass spectrometry approach.</title>
        <authorList>
            <person name="Hill J.J."/>
            <person name="Callaghan D.A."/>
            <person name="Ding W."/>
            <person name="Kelly J.F."/>
            <person name="Chakravarthy B.R."/>
        </authorList>
    </citation>
    <scope>PROTEIN SEQUENCE OF 84-122</scope>
    <scope>PHOSPHORYLATION AT SER-93</scope>
    <scope>IDENTIFICATION BY MASS SPECTROMETRY</scope>
</reference>
<reference key="4">
    <citation type="journal article" date="1995" name="Biochem. Biophys. Res. Commun.">
        <title>Synaphin: a protein associated with the docking/fusion complex in presynaptic terminals.</title>
        <authorList>
            <person name="Ishizuka T."/>
            <person name="Saisu H."/>
            <person name="Odani S."/>
            <person name="Abe T."/>
        </authorList>
    </citation>
    <scope>TISSUE SPECIFICITY</scope>
    <scope>SUBCELLULAR LOCATION</scope>
</reference>
<reference key="5">
    <citation type="journal article" date="1998" name="Eur. J. Neurosci.">
        <title>Regulatory roles of complexins in neurotransmitter release from mature presynaptic nerve terminals.</title>
        <authorList>
            <person name="Ono S."/>
            <person name="Baux G."/>
            <person name="Sekiguchi M."/>
            <person name="Fossier P."/>
            <person name="Morel N.F."/>
            <person name="Nihonmatsu I."/>
            <person name="Hirata K."/>
            <person name="Awaji T."/>
            <person name="Takahashi S."/>
            <person name="Takahashi M."/>
        </authorList>
    </citation>
    <scope>SUBCELLULAR LOCATION</scope>
</reference>
<reference key="6">
    <citation type="journal article" date="1999" name="Neuroscience">
        <title>Immunohistochemical distribution of the two isoforms of synaphin/complexin involved in neurotransmitter release: localization at the distinct central nervous system regions and synaptic types.</title>
        <authorList>
            <person name="Yamada M."/>
            <person name="Saisu H."/>
            <person name="Ishizuka T."/>
            <person name="Takahashi H."/>
            <person name="Abe T."/>
        </authorList>
    </citation>
    <scope>TISSUE SPECIFICITY</scope>
</reference>
<reference key="7">
    <citation type="journal article" date="2000" name="J. Biol. Chem.">
        <title>Selective interaction of complexin with the neuronal SNARE complex. Determination of the binding regions.</title>
        <authorList>
            <person name="Pabst S."/>
            <person name="Hazzard J.W."/>
            <person name="Antonin W."/>
            <person name="Suedhof T.C."/>
            <person name="Jahn R."/>
            <person name="Rizo J."/>
            <person name="Fasshauer D."/>
        </authorList>
    </citation>
    <scope>SUBUNIT</scope>
</reference>
<reference key="8">
    <citation type="journal article" date="2002" name="J. Biol. Chem.">
        <title>Rapid and selective binding to the synaptic SNARE complex suggests a modulatory role of complexins in neuroexocytosis.</title>
        <authorList>
            <person name="Pabst S."/>
            <person name="Margittai M."/>
            <person name="Vainius D."/>
            <person name="Langen R."/>
            <person name="Jahn R."/>
            <person name="Fasshauer D."/>
        </authorList>
    </citation>
    <scope>SUBUNIT</scope>
</reference>
<reference key="9">
    <citation type="journal article" date="2005" name="J. Cell Biol.">
        <title>Structurally and functionally unique complexins at retinal ribbon synapses.</title>
        <authorList>
            <person name="Reim K."/>
            <person name="Wegmeyer H."/>
            <person name="Brandstaetter J.H."/>
            <person name="Xue M."/>
            <person name="Rosenmund C."/>
            <person name="Dresbach T."/>
            <person name="Hofmann K."/>
            <person name="Brose N."/>
        </authorList>
    </citation>
    <scope>TISSUE SPECIFICITY</scope>
    <scope>SUBCELLULAR LOCATION</scope>
</reference>
<reference key="10">
    <citation type="journal article" date="2005" name="J. Cell Sci.">
        <title>Complexin II facilitates exocytotic release in mast cells by enhancing Ca2+ sensitivity of the fusion process.</title>
        <authorList>
            <person name="Tadokoro S."/>
            <person name="Nakanishi M."/>
            <person name="Hirashima N."/>
        </authorList>
    </citation>
    <scope>TISSUE SPECIFICITY</scope>
    <scope>SUBCELLULAR LOCATION</scope>
    <scope>FUNCTION</scope>
</reference>
<name>CPLX2_RAT</name>
<gene>
    <name type="primary">Cplx2</name>
</gene>
<organism>
    <name type="scientific">Rattus norvegicus</name>
    <name type="common">Rat</name>
    <dbReference type="NCBI Taxonomy" id="10116"/>
    <lineage>
        <taxon>Eukaryota</taxon>
        <taxon>Metazoa</taxon>
        <taxon>Chordata</taxon>
        <taxon>Craniata</taxon>
        <taxon>Vertebrata</taxon>
        <taxon>Euteleostomi</taxon>
        <taxon>Mammalia</taxon>
        <taxon>Eutheria</taxon>
        <taxon>Euarchontoglires</taxon>
        <taxon>Glires</taxon>
        <taxon>Rodentia</taxon>
        <taxon>Myomorpha</taxon>
        <taxon>Muroidea</taxon>
        <taxon>Muridae</taxon>
        <taxon>Murinae</taxon>
        <taxon>Rattus</taxon>
    </lineage>
</organism>
<feature type="chain" id="PRO_0000144877" description="Complexin-2">
    <location>
        <begin position="1"/>
        <end position="134"/>
    </location>
</feature>
<feature type="region of interest" description="Disordered" evidence="2">
    <location>
        <begin position="1"/>
        <end position="114"/>
    </location>
</feature>
<feature type="region of interest" description="Interaction with the SNARE complex">
    <location>
        <begin position="41"/>
        <end position="97"/>
    </location>
</feature>
<feature type="coiled-coil region" evidence="1">
    <location>
        <begin position="28"/>
        <end position="84"/>
    </location>
</feature>
<feature type="compositionally biased region" description="Basic and acidic residues" evidence="2">
    <location>
        <begin position="15"/>
        <end position="85"/>
    </location>
</feature>
<feature type="modified residue" description="Phosphoserine" evidence="9">
    <location>
        <position position="93"/>
    </location>
</feature>
<keyword id="KW-0966">Cell projection</keyword>
<keyword id="KW-0175">Coiled coil</keyword>
<keyword id="KW-0963">Cytoplasm</keyword>
<keyword id="KW-0903">Direct protein sequencing</keyword>
<keyword id="KW-0268">Exocytosis</keyword>
<keyword id="KW-0467">Mast cell degranulation</keyword>
<keyword id="KW-0532">Neurotransmitter transport</keyword>
<keyword id="KW-0539">Nucleus</keyword>
<keyword id="KW-0597">Phosphoprotein</keyword>
<keyword id="KW-1185">Reference proteome</keyword>
<keyword id="KW-0770">Synapse</keyword>
<keyword id="KW-0813">Transport</keyword>
<proteinExistence type="evidence at protein level"/>
<protein>
    <recommendedName>
        <fullName>Complexin-2</fullName>
    </recommendedName>
    <alternativeName>
        <fullName>Complexin II</fullName>
        <shortName>CPX II</shortName>
    </alternativeName>
    <alternativeName>
        <fullName evidence="13">Synaphin-1</fullName>
    </alternativeName>
</protein>
<comment type="function">
    <text evidence="7">Negatively regulates the formation of synaptic vesicle clustering at active zone to the presynaptic membrane in postmitotic neurons. Positively regulates a late step in exocytosis of various cytoplasmic vesicles, such as synaptic vesicles and other secretory vesicles. Also involved in mast cell exocytosis (PubMed:15870114).</text>
</comment>
<comment type="subunit">
    <text evidence="5 6 10">Binds to the SNARE core complex containing SNAP25, VAMP2 and STX1A.</text>
</comment>
<comment type="subcellular location">
    <subcellularLocation>
        <location evidence="11">Cytoplasm</location>
        <location evidence="11">Cytosol</location>
    </subcellularLocation>
    <subcellularLocation>
        <location evidence="8 11">Presynapse</location>
    </subcellularLocation>
    <subcellularLocation>
        <location>Nucleus</location>
    </subcellularLocation>
    <subcellularLocation>
        <location evidence="12">Perikaryon</location>
    </subcellularLocation>
    <text evidence="11">Translocated from the perikaryon to the presynaptic terminals during maturation of neuronal cells (PubMed:7654227). In mast cells, cytosol and nucleus. Becomes enriched near plasma membrane following stimulation.</text>
</comment>
<comment type="tissue specificity">
    <text evidence="3 4 7 8 10 11">Nervous system. Strongly expressed in brain, where it is predominant in neurons from cerebral cortex and hippocampus. Also present in mast cells (at protein level).</text>
</comment>
<comment type="PTM">
    <text>Ser-93 is dephosphorylated by PP2A.</text>
</comment>
<comment type="similarity">
    <text evidence="14">Belongs to the complexin/synaphin family.</text>
</comment>